<proteinExistence type="inferred from homology"/>
<reference key="1">
    <citation type="journal article" date="2016" name="Genome Announc.">
        <title>Complete genome sequence of Alkaliphilus metalliredigens strain QYMF, an alkaliphilic and metal-reducing bacterium isolated from borax-contaminated leachate ponds.</title>
        <authorList>
            <person name="Hwang C."/>
            <person name="Copeland A."/>
            <person name="Lucas S."/>
            <person name="Lapidus A."/>
            <person name="Barry K."/>
            <person name="Detter J.C."/>
            <person name="Glavina Del Rio T."/>
            <person name="Hammon N."/>
            <person name="Israni S."/>
            <person name="Dalin E."/>
            <person name="Tice H."/>
            <person name="Pitluck S."/>
            <person name="Chertkov O."/>
            <person name="Brettin T."/>
            <person name="Bruce D."/>
            <person name="Han C."/>
            <person name="Schmutz J."/>
            <person name="Larimer F."/>
            <person name="Land M.L."/>
            <person name="Hauser L."/>
            <person name="Kyrpides N."/>
            <person name="Mikhailova N."/>
            <person name="Ye Q."/>
            <person name="Zhou J."/>
            <person name="Richardson P."/>
            <person name="Fields M.W."/>
        </authorList>
    </citation>
    <scope>NUCLEOTIDE SEQUENCE [LARGE SCALE GENOMIC DNA]</scope>
    <source>
        <strain>QYMF</strain>
    </source>
</reference>
<feature type="chain" id="PRO_1000059735" description="ATP-dependent 6-phosphofructokinase">
    <location>
        <begin position="1"/>
        <end position="319"/>
    </location>
</feature>
<feature type="active site" description="Proton acceptor" evidence="1">
    <location>
        <position position="127"/>
    </location>
</feature>
<feature type="binding site" evidence="1">
    <location>
        <position position="11"/>
    </location>
    <ligand>
        <name>ATP</name>
        <dbReference type="ChEBI" id="CHEBI:30616"/>
    </ligand>
</feature>
<feature type="binding site" evidence="1">
    <location>
        <begin position="21"/>
        <end position="25"/>
    </location>
    <ligand>
        <name>ADP</name>
        <dbReference type="ChEBI" id="CHEBI:456216"/>
        <note>allosteric activator; ligand shared between dimeric partners</note>
    </ligand>
</feature>
<feature type="binding site" evidence="1">
    <location>
        <begin position="72"/>
        <end position="73"/>
    </location>
    <ligand>
        <name>ATP</name>
        <dbReference type="ChEBI" id="CHEBI:30616"/>
    </ligand>
</feature>
<feature type="binding site" evidence="1">
    <location>
        <begin position="102"/>
        <end position="105"/>
    </location>
    <ligand>
        <name>ATP</name>
        <dbReference type="ChEBI" id="CHEBI:30616"/>
    </ligand>
</feature>
<feature type="binding site" evidence="1">
    <location>
        <position position="103"/>
    </location>
    <ligand>
        <name>Mg(2+)</name>
        <dbReference type="ChEBI" id="CHEBI:18420"/>
        <note>catalytic</note>
    </ligand>
</feature>
<feature type="binding site" description="in other chain" evidence="1">
    <location>
        <begin position="125"/>
        <end position="127"/>
    </location>
    <ligand>
        <name>substrate</name>
        <note>ligand shared between dimeric partners</note>
    </ligand>
</feature>
<feature type="binding site" description="in other chain" evidence="1">
    <location>
        <position position="154"/>
    </location>
    <ligand>
        <name>ADP</name>
        <dbReference type="ChEBI" id="CHEBI:456216"/>
        <note>allosteric activator; ligand shared between dimeric partners</note>
    </ligand>
</feature>
<feature type="binding site" evidence="1">
    <location>
        <position position="162"/>
    </location>
    <ligand>
        <name>substrate</name>
        <note>ligand shared between dimeric partners</note>
    </ligand>
</feature>
<feature type="binding site" description="in other chain" evidence="1">
    <location>
        <begin position="169"/>
        <end position="171"/>
    </location>
    <ligand>
        <name>substrate</name>
        <note>ligand shared between dimeric partners</note>
    </ligand>
</feature>
<feature type="binding site" description="in other chain" evidence="1">
    <location>
        <begin position="185"/>
        <end position="187"/>
    </location>
    <ligand>
        <name>ADP</name>
        <dbReference type="ChEBI" id="CHEBI:456216"/>
        <note>allosteric activator; ligand shared between dimeric partners</note>
    </ligand>
</feature>
<feature type="binding site" description="in other chain" evidence="1">
    <location>
        <position position="211"/>
    </location>
    <ligand>
        <name>ADP</name>
        <dbReference type="ChEBI" id="CHEBI:456216"/>
        <note>allosteric activator; ligand shared between dimeric partners</note>
    </ligand>
</feature>
<feature type="binding site" description="in other chain" evidence="1">
    <location>
        <begin position="213"/>
        <end position="215"/>
    </location>
    <ligand>
        <name>ADP</name>
        <dbReference type="ChEBI" id="CHEBI:456216"/>
        <note>allosteric activator; ligand shared between dimeric partners</note>
    </ligand>
</feature>
<feature type="binding site" description="in other chain" evidence="1">
    <location>
        <position position="222"/>
    </location>
    <ligand>
        <name>substrate</name>
        <note>ligand shared between dimeric partners</note>
    </ligand>
</feature>
<feature type="binding site" evidence="1">
    <location>
        <position position="243"/>
    </location>
    <ligand>
        <name>substrate</name>
        <note>ligand shared between dimeric partners</note>
    </ligand>
</feature>
<feature type="binding site" description="in other chain" evidence="1">
    <location>
        <begin position="249"/>
        <end position="252"/>
    </location>
    <ligand>
        <name>substrate</name>
        <note>ligand shared between dimeric partners</note>
    </ligand>
</feature>
<organism>
    <name type="scientific">Alkaliphilus metalliredigens (strain QYMF)</name>
    <dbReference type="NCBI Taxonomy" id="293826"/>
    <lineage>
        <taxon>Bacteria</taxon>
        <taxon>Bacillati</taxon>
        <taxon>Bacillota</taxon>
        <taxon>Clostridia</taxon>
        <taxon>Peptostreptococcales</taxon>
        <taxon>Natronincolaceae</taxon>
        <taxon>Alkaliphilus</taxon>
    </lineage>
</organism>
<gene>
    <name evidence="1" type="primary">pfkA</name>
    <name type="ordered locus">Amet_4069</name>
</gene>
<keyword id="KW-0021">Allosteric enzyme</keyword>
<keyword id="KW-0067">ATP-binding</keyword>
<keyword id="KW-0963">Cytoplasm</keyword>
<keyword id="KW-0324">Glycolysis</keyword>
<keyword id="KW-0418">Kinase</keyword>
<keyword id="KW-0460">Magnesium</keyword>
<keyword id="KW-0479">Metal-binding</keyword>
<keyword id="KW-0547">Nucleotide-binding</keyword>
<keyword id="KW-1185">Reference proteome</keyword>
<keyword id="KW-0808">Transferase</keyword>
<name>PFKA_ALKMQ</name>
<comment type="function">
    <text evidence="1">Catalyzes the phosphorylation of D-fructose 6-phosphate to fructose 1,6-bisphosphate by ATP, the first committing step of glycolysis.</text>
</comment>
<comment type="catalytic activity">
    <reaction evidence="1">
        <text>beta-D-fructose 6-phosphate + ATP = beta-D-fructose 1,6-bisphosphate + ADP + H(+)</text>
        <dbReference type="Rhea" id="RHEA:16109"/>
        <dbReference type="ChEBI" id="CHEBI:15378"/>
        <dbReference type="ChEBI" id="CHEBI:30616"/>
        <dbReference type="ChEBI" id="CHEBI:32966"/>
        <dbReference type="ChEBI" id="CHEBI:57634"/>
        <dbReference type="ChEBI" id="CHEBI:456216"/>
        <dbReference type="EC" id="2.7.1.11"/>
    </reaction>
</comment>
<comment type="cofactor">
    <cofactor evidence="1">
        <name>Mg(2+)</name>
        <dbReference type="ChEBI" id="CHEBI:18420"/>
    </cofactor>
</comment>
<comment type="activity regulation">
    <text evidence="1">Allosterically activated by ADP and other diphosphonucleosides, and allosterically inhibited by phosphoenolpyruvate.</text>
</comment>
<comment type="pathway">
    <text evidence="1">Carbohydrate degradation; glycolysis; D-glyceraldehyde 3-phosphate and glycerone phosphate from D-glucose: step 3/4.</text>
</comment>
<comment type="subunit">
    <text evidence="1">Homotetramer.</text>
</comment>
<comment type="subcellular location">
    <subcellularLocation>
        <location evidence="1">Cytoplasm</location>
    </subcellularLocation>
</comment>
<comment type="similarity">
    <text evidence="1">Belongs to the phosphofructokinase type A (PFKA) family. ATP-dependent PFK group I subfamily. Prokaryotic clade 'B1' sub-subfamily.</text>
</comment>
<evidence type="ECO:0000255" key="1">
    <source>
        <dbReference type="HAMAP-Rule" id="MF_00339"/>
    </source>
</evidence>
<dbReference type="EC" id="2.7.1.11" evidence="1"/>
<dbReference type="EMBL" id="CP000724">
    <property type="protein sequence ID" value="ABR50151.1"/>
    <property type="molecule type" value="Genomic_DNA"/>
</dbReference>
<dbReference type="RefSeq" id="WP_012065102.1">
    <property type="nucleotide sequence ID" value="NC_009633.1"/>
</dbReference>
<dbReference type="SMR" id="A6TVD3"/>
<dbReference type="STRING" id="293826.Amet_4069"/>
<dbReference type="KEGG" id="amt:Amet_4069"/>
<dbReference type="eggNOG" id="COG0205">
    <property type="taxonomic scope" value="Bacteria"/>
</dbReference>
<dbReference type="HOGENOM" id="CLU_020655_0_1_9"/>
<dbReference type="OrthoDB" id="9802503at2"/>
<dbReference type="UniPathway" id="UPA00109">
    <property type="reaction ID" value="UER00182"/>
</dbReference>
<dbReference type="Proteomes" id="UP000001572">
    <property type="component" value="Chromosome"/>
</dbReference>
<dbReference type="GO" id="GO:0005945">
    <property type="term" value="C:6-phosphofructokinase complex"/>
    <property type="evidence" value="ECO:0007669"/>
    <property type="project" value="TreeGrafter"/>
</dbReference>
<dbReference type="GO" id="GO:0003872">
    <property type="term" value="F:6-phosphofructokinase activity"/>
    <property type="evidence" value="ECO:0007669"/>
    <property type="project" value="UniProtKB-UniRule"/>
</dbReference>
<dbReference type="GO" id="GO:0016208">
    <property type="term" value="F:AMP binding"/>
    <property type="evidence" value="ECO:0007669"/>
    <property type="project" value="TreeGrafter"/>
</dbReference>
<dbReference type="GO" id="GO:0005524">
    <property type="term" value="F:ATP binding"/>
    <property type="evidence" value="ECO:0007669"/>
    <property type="project" value="UniProtKB-KW"/>
</dbReference>
<dbReference type="GO" id="GO:0070095">
    <property type="term" value="F:fructose-6-phosphate binding"/>
    <property type="evidence" value="ECO:0007669"/>
    <property type="project" value="TreeGrafter"/>
</dbReference>
<dbReference type="GO" id="GO:0042802">
    <property type="term" value="F:identical protein binding"/>
    <property type="evidence" value="ECO:0007669"/>
    <property type="project" value="TreeGrafter"/>
</dbReference>
<dbReference type="GO" id="GO:0046872">
    <property type="term" value="F:metal ion binding"/>
    <property type="evidence" value="ECO:0007669"/>
    <property type="project" value="UniProtKB-KW"/>
</dbReference>
<dbReference type="GO" id="GO:0048029">
    <property type="term" value="F:monosaccharide binding"/>
    <property type="evidence" value="ECO:0007669"/>
    <property type="project" value="TreeGrafter"/>
</dbReference>
<dbReference type="GO" id="GO:0061621">
    <property type="term" value="P:canonical glycolysis"/>
    <property type="evidence" value="ECO:0007669"/>
    <property type="project" value="TreeGrafter"/>
</dbReference>
<dbReference type="GO" id="GO:0030388">
    <property type="term" value="P:fructose 1,6-bisphosphate metabolic process"/>
    <property type="evidence" value="ECO:0007669"/>
    <property type="project" value="TreeGrafter"/>
</dbReference>
<dbReference type="GO" id="GO:0006002">
    <property type="term" value="P:fructose 6-phosphate metabolic process"/>
    <property type="evidence" value="ECO:0007669"/>
    <property type="project" value="InterPro"/>
</dbReference>
<dbReference type="FunFam" id="3.40.50.450:FF:000001">
    <property type="entry name" value="ATP-dependent 6-phosphofructokinase"/>
    <property type="match status" value="1"/>
</dbReference>
<dbReference type="FunFam" id="3.40.50.460:FF:000002">
    <property type="entry name" value="ATP-dependent 6-phosphofructokinase"/>
    <property type="match status" value="1"/>
</dbReference>
<dbReference type="Gene3D" id="3.40.50.450">
    <property type="match status" value="1"/>
</dbReference>
<dbReference type="Gene3D" id="3.40.50.460">
    <property type="entry name" value="Phosphofructokinase domain"/>
    <property type="match status" value="1"/>
</dbReference>
<dbReference type="HAMAP" id="MF_00339">
    <property type="entry name" value="Phosphofructokinase_I_B1"/>
    <property type="match status" value="1"/>
</dbReference>
<dbReference type="InterPro" id="IPR022953">
    <property type="entry name" value="ATP_PFK"/>
</dbReference>
<dbReference type="InterPro" id="IPR012003">
    <property type="entry name" value="ATP_PFK_prok-type"/>
</dbReference>
<dbReference type="InterPro" id="IPR012828">
    <property type="entry name" value="PFKA_ATP_prok"/>
</dbReference>
<dbReference type="InterPro" id="IPR015912">
    <property type="entry name" value="Phosphofructokinase_CS"/>
</dbReference>
<dbReference type="InterPro" id="IPR000023">
    <property type="entry name" value="Phosphofructokinase_dom"/>
</dbReference>
<dbReference type="InterPro" id="IPR035966">
    <property type="entry name" value="PKF_sf"/>
</dbReference>
<dbReference type="NCBIfam" id="TIGR02482">
    <property type="entry name" value="PFKA_ATP"/>
    <property type="match status" value="1"/>
</dbReference>
<dbReference type="NCBIfam" id="NF002872">
    <property type="entry name" value="PRK03202.1"/>
    <property type="match status" value="1"/>
</dbReference>
<dbReference type="PANTHER" id="PTHR13697:SF4">
    <property type="entry name" value="ATP-DEPENDENT 6-PHOSPHOFRUCTOKINASE"/>
    <property type="match status" value="1"/>
</dbReference>
<dbReference type="PANTHER" id="PTHR13697">
    <property type="entry name" value="PHOSPHOFRUCTOKINASE"/>
    <property type="match status" value="1"/>
</dbReference>
<dbReference type="Pfam" id="PF00365">
    <property type="entry name" value="PFK"/>
    <property type="match status" value="1"/>
</dbReference>
<dbReference type="PIRSF" id="PIRSF000532">
    <property type="entry name" value="ATP_PFK_prok"/>
    <property type="match status" value="1"/>
</dbReference>
<dbReference type="PRINTS" id="PR00476">
    <property type="entry name" value="PHFRCTKINASE"/>
</dbReference>
<dbReference type="SUPFAM" id="SSF53784">
    <property type="entry name" value="Phosphofructokinase"/>
    <property type="match status" value="1"/>
</dbReference>
<dbReference type="PROSITE" id="PS00433">
    <property type="entry name" value="PHOSPHOFRUCTOKINASE"/>
    <property type="match status" value="1"/>
</dbReference>
<accession>A6TVD3</accession>
<sequence>MKTIGVLTSGGDSPGMNAAIRAVVRSGIYNGCKIMGIKQGYSGLINAKIEEMNLSSVADIIHRGGTILRTARCEEFRTEEGRKKALNVLKVLKIDGVVVIGGDGSFQGAKKLSELGIPTVAVPGTIDNDLGYSDYTIGFDTAMNTVLDAISKIRDTSTSHGRANIIEVMGRHCGDIALYTGLAGGAESIIIPEVGLDIDEICRKLLQGKNRGKLHSLIVLAEGVGGAIDLGKIIEEKTGIETRSTVFGHIQRGGSPTAFDRILASKMGARAVDLLIEEKGNRAVGIKGNQIFDMDIEEALNIENKFDQETFELAKILSI</sequence>
<protein>
    <recommendedName>
        <fullName evidence="1">ATP-dependent 6-phosphofructokinase</fullName>
        <shortName evidence="1">ATP-PFK</shortName>
        <shortName evidence="1">Phosphofructokinase</shortName>
        <ecNumber evidence="1">2.7.1.11</ecNumber>
    </recommendedName>
    <alternativeName>
        <fullName evidence="1">Phosphohexokinase</fullName>
    </alternativeName>
</protein>